<gene>
    <name type="primary">PHO8</name>
    <name type="ordered locus">YDR481C</name>
    <name type="ORF">D8035.24</name>
</gene>
<name>PPB_YEAST</name>
<comment type="function">
    <text evidence="7">Phosphatase with broad substrate specificity. A truncated (soluble) version of the protein is responsible for the production of (E,E)-farnesol from (E,E)-farnesyl diphosphate. Acts as a fructose-2,6-bisphosphate 6-phosphatase (PubMed:1848184).</text>
</comment>
<comment type="catalytic activity">
    <reaction evidence="3 6">
        <text>a phosphate monoester + H2O = an alcohol + phosphate</text>
        <dbReference type="Rhea" id="RHEA:15017"/>
        <dbReference type="ChEBI" id="CHEBI:15377"/>
        <dbReference type="ChEBI" id="CHEBI:30879"/>
        <dbReference type="ChEBI" id="CHEBI:43474"/>
        <dbReference type="ChEBI" id="CHEBI:67140"/>
        <dbReference type="EC" id="3.1.3.1"/>
    </reaction>
</comment>
<comment type="catalytic activity">
    <reaction evidence="6">
        <text>(2E,6E)-farnesyl diphosphate + H2O = (2E,6E)-farnesol + diphosphate</text>
        <dbReference type="Rhea" id="RHEA:27526"/>
        <dbReference type="ChEBI" id="CHEBI:15377"/>
        <dbReference type="ChEBI" id="CHEBI:16619"/>
        <dbReference type="ChEBI" id="CHEBI:33019"/>
        <dbReference type="ChEBI" id="CHEBI:175763"/>
        <dbReference type="EC" id="3.1.7.6"/>
    </reaction>
</comment>
<comment type="catalytic activity">
    <reaction evidence="7">
        <text>beta-D-fructose 2,6-bisphosphate + H2O = beta-D-fructose 2-phosphate + phosphate</text>
        <dbReference type="Rhea" id="RHEA:13333"/>
        <dbReference type="ChEBI" id="CHEBI:15377"/>
        <dbReference type="ChEBI" id="CHEBI:43474"/>
        <dbReference type="ChEBI" id="CHEBI:57267"/>
        <dbReference type="ChEBI" id="CHEBI:58579"/>
        <dbReference type="EC" id="3.1.3.54"/>
    </reaction>
</comment>
<comment type="cofactor">
    <cofactor evidence="1">
        <name>Mg(2+)</name>
        <dbReference type="ChEBI" id="CHEBI:18420"/>
    </cofactor>
    <text evidence="1">Binds 1 Mg(2+) ion.</text>
</comment>
<comment type="cofactor">
    <cofactor evidence="1">
        <name>Zn(2+)</name>
        <dbReference type="ChEBI" id="CHEBI:29105"/>
    </cofactor>
    <text evidence="1">Binds 2 Zn(2+) ions.</text>
</comment>
<comment type="biophysicochemical properties">
    <phDependence>
        <text evidence="6">Optimum pH is 7.0 for farnesyl diphosphatase activity.</text>
    </phDependence>
</comment>
<comment type="subcellular location">
    <molecule>Repressible alkaline phosphatase</molecule>
    <subcellularLocation>
        <location>Vacuole membrane</location>
        <topology>Single-pass membrane protein</topology>
    </subcellularLocation>
    <text>The full-length version is found in lysosome-like vacuoles.</text>
</comment>
<comment type="subcellular location">
    <molecule>Soluble alkaline phosphatase</molecule>
    <subcellularLocation>
        <location>Cytoplasm</location>
    </subcellularLocation>
    <text>The truncated version of the protein is soluble.</text>
</comment>
<comment type="miscellaneous">
    <text evidence="5">Present with 3060 molecules/cell in log phase SD medium.</text>
</comment>
<comment type="similarity">
    <text evidence="9">Belongs to the alkaline phosphatase family.</text>
</comment>
<protein>
    <recommendedName>
        <fullName>Repressible alkaline phosphatase</fullName>
        <ecNumber evidence="6">3.1.3.1</ecNumber>
    </recommendedName>
    <alternativeName>
        <fullName>Fructose-2,6-bisphosphate 6-phosphatase</fullName>
        <ecNumber evidence="7">3.1.3.54</ecNumber>
    </alternativeName>
    <alternativeName>
        <fullName>Membrane-bound repressible alkaline phosphatase</fullName>
    </alternativeName>
    <component>
        <recommendedName>
            <fullName>Soluble alkaline phosphatase</fullName>
            <ecNumber evidence="6">3.1.7.6</ecNumber>
        </recommendedName>
        <alternativeName>
            <fullName>Farnesyl diphosphatase</fullName>
        </alternativeName>
    </component>
</protein>
<dbReference type="EC" id="3.1.3.1" evidence="6"/>
<dbReference type="EC" id="3.1.3.54" evidence="7"/>
<dbReference type="EC" id="3.1.7.6" evidence="6"/>
<dbReference type="EMBL" id="M21134">
    <property type="protein sequence ID" value="AAA34871.1"/>
    <property type="molecule type" value="Genomic_DNA"/>
</dbReference>
<dbReference type="EMBL" id="U33050">
    <property type="protein sequence ID" value="AAB64930.1"/>
    <property type="molecule type" value="Genomic_DNA"/>
</dbReference>
<dbReference type="EMBL" id="AY723794">
    <property type="protein sequence ID" value="AAU09711.1"/>
    <property type="molecule type" value="Genomic_DNA"/>
</dbReference>
<dbReference type="EMBL" id="BK006938">
    <property type="protein sequence ID" value="DAA12314.1"/>
    <property type="molecule type" value="Genomic_DNA"/>
</dbReference>
<dbReference type="PIR" id="S69648">
    <property type="entry name" value="S69648"/>
</dbReference>
<dbReference type="RefSeq" id="NP_010769.3">
    <property type="nucleotide sequence ID" value="NM_001180789.3"/>
</dbReference>
<dbReference type="SMR" id="P11491"/>
<dbReference type="BioGRID" id="32533">
    <property type="interactions" value="119"/>
</dbReference>
<dbReference type="FunCoup" id="P11491">
    <property type="interactions" value="289"/>
</dbReference>
<dbReference type="IntAct" id="P11491">
    <property type="interactions" value="39"/>
</dbReference>
<dbReference type="MINT" id="P11491"/>
<dbReference type="STRING" id="4932.YDR481C"/>
<dbReference type="GlyCosmos" id="P11491">
    <property type="glycosylation" value="2 sites, No reported glycans"/>
</dbReference>
<dbReference type="GlyGen" id="P11491">
    <property type="glycosylation" value="2 sites"/>
</dbReference>
<dbReference type="iPTMnet" id="P11491"/>
<dbReference type="PaxDb" id="4932-YDR481C"/>
<dbReference type="PeptideAtlas" id="P11491"/>
<dbReference type="EnsemblFungi" id="YDR481C_mRNA">
    <property type="protein sequence ID" value="YDR481C"/>
    <property type="gene ID" value="YDR481C"/>
</dbReference>
<dbReference type="GeneID" id="852092"/>
<dbReference type="KEGG" id="sce:YDR481C"/>
<dbReference type="AGR" id="SGD:S000002889"/>
<dbReference type="SGD" id="S000002889">
    <property type="gene designation" value="PHO8"/>
</dbReference>
<dbReference type="VEuPathDB" id="FungiDB:YDR481C"/>
<dbReference type="eggNOG" id="KOG4126">
    <property type="taxonomic scope" value="Eukaryota"/>
</dbReference>
<dbReference type="GeneTree" id="ENSGT00950000183063"/>
<dbReference type="HOGENOM" id="CLU_008539_6_0_1"/>
<dbReference type="InParanoid" id="P11491"/>
<dbReference type="OMA" id="KAAGYMT"/>
<dbReference type="OrthoDB" id="7392499at2759"/>
<dbReference type="BioCyc" id="MetaCyc:YDR481C-MONOMER"/>
<dbReference type="BioCyc" id="YEAST:YDR481C-MONOMER"/>
<dbReference type="BioGRID-ORCS" id="852092">
    <property type="hits" value="1 hit in 10 CRISPR screens"/>
</dbReference>
<dbReference type="PRO" id="PR:P11491"/>
<dbReference type="Proteomes" id="UP000002311">
    <property type="component" value="Chromosome IV"/>
</dbReference>
<dbReference type="RNAct" id="P11491">
    <property type="molecule type" value="protein"/>
</dbReference>
<dbReference type="GO" id="GO:0000329">
    <property type="term" value="C:fungal-type vacuole membrane"/>
    <property type="evidence" value="ECO:0000314"/>
    <property type="project" value="SGD"/>
</dbReference>
<dbReference type="GO" id="GO:0004035">
    <property type="term" value="F:alkaline phosphatase activity"/>
    <property type="evidence" value="ECO:0000314"/>
    <property type="project" value="SGD"/>
</dbReference>
<dbReference type="GO" id="GO:0047386">
    <property type="term" value="F:fructose-2,6-bisphosphate 6-phosphatase activity"/>
    <property type="evidence" value="ECO:0000314"/>
    <property type="project" value="UniProtKB"/>
</dbReference>
<dbReference type="GO" id="GO:0046872">
    <property type="term" value="F:metal ion binding"/>
    <property type="evidence" value="ECO:0007669"/>
    <property type="project" value="UniProtKB-KW"/>
</dbReference>
<dbReference type="GO" id="GO:0046496">
    <property type="term" value="P:nicotinamide nucleotide metabolic process"/>
    <property type="evidence" value="ECO:0000315"/>
    <property type="project" value="SGD"/>
</dbReference>
<dbReference type="GO" id="GO:0009166">
    <property type="term" value="P:nucleotide catabolic process"/>
    <property type="evidence" value="ECO:0000315"/>
    <property type="project" value="SGD"/>
</dbReference>
<dbReference type="CDD" id="cd16012">
    <property type="entry name" value="ALP"/>
    <property type="match status" value="1"/>
</dbReference>
<dbReference type="FunFam" id="1.10.60.40:FF:000002">
    <property type="entry name" value="Alkaline phosphatase"/>
    <property type="match status" value="1"/>
</dbReference>
<dbReference type="FunFam" id="3.40.720.10:FF:000063">
    <property type="entry name" value="Alkaline phosphatase"/>
    <property type="match status" value="1"/>
</dbReference>
<dbReference type="Gene3D" id="1.10.60.40">
    <property type="match status" value="1"/>
</dbReference>
<dbReference type="Gene3D" id="3.40.720.10">
    <property type="entry name" value="Alkaline Phosphatase, subunit A"/>
    <property type="match status" value="1"/>
</dbReference>
<dbReference type="InterPro" id="IPR001952">
    <property type="entry name" value="Alkaline_phosphatase"/>
</dbReference>
<dbReference type="InterPro" id="IPR018299">
    <property type="entry name" value="Alkaline_phosphatase_AS"/>
</dbReference>
<dbReference type="InterPro" id="IPR017850">
    <property type="entry name" value="Alkaline_phosphatase_core_sf"/>
</dbReference>
<dbReference type="PANTHER" id="PTHR11596">
    <property type="entry name" value="ALKALINE PHOSPHATASE"/>
    <property type="match status" value="1"/>
</dbReference>
<dbReference type="PANTHER" id="PTHR11596:SF5">
    <property type="entry name" value="ALKALINE PHOSPHATASE"/>
    <property type="match status" value="1"/>
</dbReference>
<dbReference type="Pfam" id="PF00245">
    <property type="entry name" value="Alk_phosphatase"/>
    <property type="match status" value="1"/>
</dbReference>
<dbReference type="PRINTS" id="PR00113">
    <property type="entry name" value="ALKPHPHTASE"/>
</dbReference>
<dbReference type="SMART" id="SM00098">
    <property type="entry name" value="alkPPc"/>
    <property type="match status" value="1"/>
</dbReference>
<dbReference type="SUPFAM" id="SSF53649">
    <property type="entry name" value="Alkaline phosphatase-like"/>
    <property type="match status" value="1"/>
</dbReference>
<dbReference type="PROSITE" id="PS00123">
    <property type="entry name" value="ALKALINE_PHOSPHATASE"/>
    <property type="match status" value="1"/>
</dbReference>
<reference key="1">
    <citation type="journal article" date="1987" name="Gene">
        <title>Structural characteristics of the PHO8 gene encoding repressible alkaline phosphatase in Saccharomyces cerevisiae.</title>
        <authorList>
            <person name="Kaneko Y."/>
            <person name="Hayashi N."/>
            <person name="Toh-e A."/>
            <person name="Banno I."/>
            <person name="Oshima Y."/>
        </authorList>
    </citation>
    <scope>NUCLEOTIDE SEQUENCE [GENOMIC DNA]</scope>
    <source>
        <strain>P-28-24C</strain>
    </source>
</reference>
<reference key="2">
    <citation type="journal article" date="1997" name="Nature">
        <title>The nucleotide sequence of Saccharomyces cerevisiae chromosome IV.</title>
        <authorList>
            <person name="Jacq C."/>
            <person name="Alt-Moerbe J."/>
            <person name="Andre B."/>
            <person name="Arnold W."/>
            <person name="Bahr A."/>
            <person name="Ballesta J.P.G."/>
            <person name="Bargues M."/>
            <person name="Baron L."/>
            <person name="Becker A."/>
            <person name="Biteau N."/>
            <person name="Bloecker H."/>
            <person name="Blugeon C."/>
            <person name="Boskovic J."/>
            <person name="Brandt P."/>
            <person name="Brueckner M."/>
            <person name="Buitrago M.J."/>
            <person name="Coster F."/>
            <person name="Delaveau T."/>
            <person name="del Rey F."/>
            <person name="Dujon B."/>
            <person name="Eide L.G."/>
            <person name="Garcia-Cantalejo J.M."/>
            <person name="Goffeau A."/>
            <person name="Gomez-Peris A."/>
            <person name="Granotier C."/>
            <person name="Hanemann V."/>
            <person name="Hankeln T."/>
            <person name="Hoheisel J.D."/>
            <person name="Jaeger W."/>
            <person name="Jimenez A."/>
            <person name="Jonniaux J.-L."/>
            <person name="Kraemer C."/>
            <person name="Kuester H."/>
            <person name="Laamanen P."/>
            <person name="Legros Y."/>
            <person name="Louis E.J."/>
            <person name="Moeller-Rieker S."/>
            <person name="Monnet A."/>
            <person name="Moro M."/>
            <person name="Mueller-Auer S."/>
            <person name="Nussbaumer B."/>
            <person name="Paricio N."/>
            <person name="Paulin L."/>
            <person name="Perea J."/>
            <person name="Perez-Alonso M."/>
            <person name="Perez-Ortin J.E."/>
            <person name="Pohl T.M."/>
            <person name="Prydz H."/>
            <person name="Purnelle B."/>
            <person name="Rasmussen S.W."/>
            <person name="Remacha M.A."/>
            <person name="Revuelta J.L."/>
            <person name="Rieger M."/>
            <person name="Salom D."/>
            <person name="Saluz H.P."/>
            <person name="Saiz J.E."/>
            <person name="Saren A.-M."/>
            <person name="Schaefer M."/>
            <person name="Scharfe M."/>
            <person name="Schmidt E.R."/>
            <person name="Schneider C."/>
            <person name="Scholler P."/>
            <person name="Schwarz S."/>
            <person name="Soler-Mira A."/>
            <person name="Urrestarazu L.A."/>
            <person name="Verhasselt P."/>
            <person name="Vissers S."/>
            <person name="Voet M."/>
            <person name="Volckaert G."/>
            <person name="Wagner G."/>
            <person name="Wambutt R."/>
            <person name="Wedler E."/>
            <person name="Wedler H."/>
            <person name="Woelfl S."/>
            <person name="Harris D.E."/>
            <person name="Bowman S."/>
            <person name="Brown D."/>
            <person name="Churcher C.M."/>
            <person name="Connor R."/>
            <person name="Dedman K."/>
            <person name="Gentles S."/>
            <person name="Hamlin N."/>
            <person name="Hunt S."/>
            <person name="Jones L."/>
            <person name="McDonald S."/>
            <person name="Murphy L.D."/>
            <person name="Niblett D."/>
            <person name="Odell C."/>
            <person name="Oliver K."/>
            <person name="Rajandream M.A."/>
            <person name="Richards C."/>
            <person name="Shore L."/>
            <person name="Walsh S.V."/>
            <person name="Barrell B.G."/>
            <person name="Dietrich F.S."/>
            <person name="Mulligan J.T."/>
            <person name="Allen E."/>
            <person name="Araujo R."/>
            <person name="Aviles E."/>
            <person name="Berno A."/>
            <person name="Carpenter J."/>
            <person name="Chen E."/>
            <person name="Cherry J.M."/>
            <person name="Chung E."/>
            <person name="Duncan M."/>
            <person name="Hunicke-Smith S."/>
            <person name="Hyman R.W."/>
            <person name="Komp C."/>
            <person name="Lashkari D."/>
            <person name="Lew H."/>
            <person name="Lin D."/>
            <person name="Mosedale D."/>
            <person name="Nakahara K."/>
            <person name="Namath A."/>
            <person name="Oefner P."/>
            <person name="Oh C."/>
            <person name="Petel F.X."/>
            <person name="Roberts D."/>
            <person name="Schramm S."/>
            <person name="Schroeder M."/>
            <person name="Shogren T."/>
            <person name="Shroff N."/>
            <person name="Winant A."/>
            <person name="Yelton M.A."/>
            <person name="Botstein D."/>
            <person name="Davis R.W."/>
            <person name="Johnston M."/>
            <person name="Andrews S."/>
            <person name="Brinkman R."/>
            <person name="Cooper J."/>
            <person name="Ding H."/>
            <person name="Du Z."/>
            <person name="Favello A."/>
            <person name="Fulton L."/>
            <person name="Gattung S."/>
            <person name="Greco T."/>
            <person name="Hallsworth K."/>
            <person name="Hawkins J."/>
            <person name="Hillier L.W."/>
            <person name="Jier M."/>
            <person name="Johnson D."/>
            <person name="Johnston L."/>
            <person name="Kirsten J."/>
            <person name="Kucaba T."/>
            <person name="Langston Y."/>
            <person name="Latreille P."/>
            <person name="Le T."/>
            <person name="Mardis E."/>
            <person name="Menezes S."/>
            <person name="Miller N."/>
            <person name="Nhan M."/>
            <person name="Pauley A."/>
            <person name="Peluso D."/>
            <person name="Rifkin L."/>
            <person name="Riles L."/>
            <person name="Taich A."/>
            <person name="Trevaskis E."/>
            <person name="Vignati D."/>
            <person name="Wilcox L."/>
            <person name="Wohldman P."/>
            <person name="Vaudin M."/>
            <person name="Wilson R."/>
            <person name="Waterston R."/>
            <person name="Albermann K."/>
            <person name="Hani J."/>
            <person name="Heumann K."/>
            <person name="Kleine K."/>
            <person name="Mewes H.-W."/>
            <person name="Zollner A."/>
            <person name="Zaccaria P."/>
        </authorList>
    </citation>
    <scope>NUCLEOTIDE SEQUENCE [LARGE SCALE GENOMIC DNA]</scope>
    <source>
        <strain>ATCC 204508 / S288c</strain>
    </source>
</reference>
<reference key="3">
    <citation type="journal article" date="2014" name="G3 (Bethesda)">
        <title>The reference genome sequence of Saccharomyces cerevisiae: Then and now.</title>
        <authorList>
            <person name="Engel S.R."/>
            <person name="Dietrich F.S."/>
            <person name="Fisk D.G."/>
            <person name="Binkley G."/>
            <person name="Balakrishnan R."/>
            <person name="Costanzo M.C."/>
            <person name="Dwight S.S."/>
            <person name="Hitz B.C."/>
            <person name="Karra K."/>
            <person name="Nash R.S."/>
            <person name="Weng S."/>
            <person name="Wong E.D."/>
            <person name="Lloyd P."/>
            <person name="Skrzypek M.S."/>
            <person name="Miyasato S.R."/>
            <person name="Simison M."/>
            <person name="Cherry J.M."/>
        </authorList>
    </citation>
    <scope>GENOME REANNOTATION</scope>
    <source>
        <strain>ATCC 204508 / S288c</strain>
    </source>
</reference>
<reference key="4">
    <citation type="journal article" date="2007" name="Genome Res.">
        <title>Approaching a complete repository of sequence-verified protein-encoding clones for Saccharomyces cerevisiae.</title>
        <authorList>
            <person name="Hu Y."/>
            <person name="Rolfs A."/>
            <person name="Bhullar B."/>
            <person name="Murthy T.V.S."/>
            <person name="Zhu C."/>
            <person name="Berger M.F."/>
            <person name="Camargo A.A."/>
            <person name="Kelley F."/>
            <person name="McCarron S."/>
            <person name="Jepson D."/>
            <person name="Richardson A."/>
            <person name="Raphael J."/>
            <person name="Moreira D."/>
            <person name="Taycher E."/>
            <person name="Zuo D."/>
            <person name="Mohr S."/>
            <person name="Kane M.F."/>
            <person name="Williamson J."/>
            <person name="Simpson A.J.G."/>
            <person name="Bulyk M.L."/>
            <person name="Harlow E."/>
            <person name="Marsischky G."/>
            <person name="Kolodner R.D."/>
            <person name="LaBaer J."/>
        </authorList>
    </citation>
    <scope>NUCLEOTIDE SEQUENCE [GENOMIC DNA]</scope>
    <source>
        <strain>ATCC 204508 / S288c</strain>
    </source>
</reference>
<reference key="5">
    <citation type="journal article" date="1989" name="EMBO J.">
        <title>Membrane protein sorting: biosynthesis, transport and processing of yeast vacuolar alkaline phosphatase.</title>
        <authorList>
            <person name="Klionsky D.J."/>
            <person name="Emr S.D."/>
        </authorList>
    </citation>
    <scope>PROTEIN SEQUENCE OF 1-10</scope>
    <scope>TOPOLOGY</scope>
    <scope>SUBCELLULAR LOCATION</scope>
</reference>
<reference key="6">
    <citation type="journal article" date="2006" name="Appl. Biochem. Biotechnol.">
        <title>A soluble form of phosphatase in Saccharomyces cerevisiae capable of converting farnesyl diphosphate into E,E-farnesol.</title>
        <authorList>
            <person name="Song L."/>
        </authorList>
    </citation>
    <scope>PROTEIN SEQUENCE OF 63-79</scope>
    <scope>CATALYTIC ACTIVITY AS FARNESYL DIPHOSPHATASE</scope>
    <scope>PH DEPENDENCE</scope>
</reference>
<reference key="7">
    <citation type="journal article" date="1991" name="Eur. J. Biochem.">
        <title>Yeast fructose-2,6-bisphosphate 6-phosphatase is encoded by PHO8, the gene for nonspecific repressible alkaline phosphatase.</title>
        <authorList>
            <person name="Plankert U."/>
            <person name="Purwin C."/>
            <person name="Holzer H."/>
        </authorList>
    </citation>
    <scope>FUNCTION</scope>
    <scope>CATALYTIC ACTIVITY</scope>
</reference>
<reference key="8">
    <citation type="journal article" date="2003" name="Nature">
        <title>Global analysis of protein expression in yeast.</title>
        <authorList>
            <person name="Ghaemmaghami S."/>
            <person name="Huh W.-K."/>
            <person name="Bower K."/>
            <person name="Howson R.W."/>
            <person name="Belle A."/>
            <person name="Dephoure N."/>
            <person name="O'Shea E.K."/>
            <person name="Weissman J.S."/>
        </authorList>
    </citation>
    <scope>LEVEL OF PROTEIN EXPRESSION [LARGE SCALE ANALYSIS]</scope>
</reference>
<reference key="9">
    <citation type="journal article" date="2007" name="J. Proteome Res.">
        <title>Large-scale phosphorylation analysis of alpha-factor-arrested Saccharomyces cerevisiae.</title>
        <authorList>
            <person name="Li X."/>
            <person name="Gerber S.A."/>
            <person name="Rudner A.D."/>
            <person name="Beausoleil S.A."/>
            <person name="Haas W."/>
            <person name="Villen J."/>
            <person name="Elias J.E."/>
            <person name="Gygi S.P."/>
        </authorList>
    </citation>
    <scope>PHOSPHORYLATION [LARGE SCALE ANALYSIS] AT SER-123</scope>
    <scope>IDENTIFICATION BY MASS SPECTROMETRY [LARGE SCALE ANALYSIS]</scope>
    <source>
        <strain>ADR376</strain>
    </source>
</reference>
<reference key="10">
    <citation type="journal article" date="2008" name="Mol. Cell. Proteomics">
        <title>A multidimensional chromatography technology for in-depth phosphoproteome analysis.</title>
        <authorList>
            <person name="Albuquerque C.P."/>
            <person name="Smolka M.B."/>
            <person name="Payne S.H."/>
            <person name="Bafna V."/>
            <person name="Eng J."/>
            <person name="Zhou H."/>
        </authorList>
    </citation>
    <scope>PHOSPHORYLATION [LARGE SCALE ANALYSIS] AT SER-123</scope>
    <scope>IDENTIFICATION BY MASS SPECTROMETRY [LARGE SCALE ANALYSIS]</scope>
</reference>
<reference key="11">
    <citation type="journal article" date="2009" name="Science">
        <title>Global analysis of Cdk1 substrate phosphorylation sites provides insights into evolution.</title>
        <authorList>
            <person name="Holt L.J."/>
            <person name="Tuch B.B."/>
            <person name="Villen J."/>
            <person name="Johnson A.D."/>
            <person name="Gygi S.P."/>
            <person name="Morgan D.O."/>
        </authorList>
    </citation>
    <scope>PHOSPHORYLATION [LARGE SCALE ANALYSIS] AT SER-123</scope>
    <scope>IDENTIFICATION BY MASS SPECTROMETRY [LARGE SCALE ANALYSIS]</scope>
</reference>
<reference key="12">
    <citation type="journal article" date="2012" name="Proc. Natl. Acad. Sci. U.S.A.">
        <title>N-terminal acetylome analyses and functional insights of the N-terminal acetyltransferase NatB.</title>
        <authorList>
            <person name="Van Damme P."/>
            <person name="Lasa M."/>
            <person name="Polevoda B."/>
            <person name="Gazquez C."/>
            <person name="Elosegui-Artola A."/>
            <person name="Kim D.S."/>
            <person name="De Juan-Pardo E."/>
            <person name="Demeyer K."/>
            <person name="Hole K."/>
            <person name="Larrea E."/>
            <person name="Timmerman E."/>
            <person name="Prieto J."/>
            <person name="Arnesen T."/>
            <person name="Sherman F."/>
            <person name="Gevaert K."/>
            <person name="Aldabe R."/>
        </authorList>
    </citation>
    <scope>IDENTIFICATION BY MASS SPECTROMETRY [LARGE SCALE ANALYSIS]</scope>
</reference>
<proteinExistence type="evidence at protein level"/>
<feature type="chain" id="PRO_0000024017" description="Repressible alkaline phosphatase">
    <location>
        <begin position="1"/>
        <end status="unknown"/>
    </location>
</feature>
<feature type="chain" id="PRO_0000401198" description="Soluble alkaline phosphatase">
    <location>
        <begin position="63"/>
        <end status="unknown"/>
    </location>
</feature>
<feature type="propeptide" id="PRO_0000024018" description="Removed in mature form">
    <location>
        <begin status="unknown"/>
        <end position="566"/>
    </location>
</feature>
<feature type="topological domain" description="Cytoplasmic" evidence="8">
    <location>
        <begin position="1"/>
        <end position="33"/>
    </location>
</feature>
<feature type="transmembrane region" description="Helical" evidence="2">
    <location>
        <begin position="34"/>
        <end position="59"/>
    </location>
</feature>
<feature type="topological domain" description="Vacuolar" evidence="8">
    <location>
        <begin position="60"/>
        <end status="unknown"/>
    </location>
</feature>
<feature type="region of interest" description="Disordered" evidence="4">
    <location>
        <begin position="1"/>
        <end position="27"/>
    </location>
</feature>
<feature type="compositionally biased region" description="Polar residues" evidence="4">
    <location>
        <begin position="1"/>
        <end position="11"/>
    </location>
</feature>
<feature type="active site" description="Phosphoserine intermediate" evidence="3">
    <location>
        <position position="123"/>
    </location>
</feature>
<feature type="binding site" evidence="1">
    <location>
        <position position="75"/>
    </location>
    <ligand>
        <name>Mg(2+)</name>
        <dbReference type="ChEBI" id="CHEBI:18420"/>
    </ligand>
</feature>
<feature type="binding site" evidence="1">
    <location>
        <position position="75"/>
    </location>
    <ligand>
        <name>Zn(2+)</name>
        <dbReference type="ChEBI" id="CHEBI:29105"/>
        <label>2</label>
    </ligand>
</feature>
<feature type="binding site" evidence="1">
    <location>
        <position position="174"/>
    </location>
    <ligand>
        <name>Mg(2+)</name>
        <dbReference type="ChEBI" id="CHEBI:18420"/>
    </ligand>
</feature>
<feature type="binding site" evidence="1">
    <location>
        <position position="176"/>
    </location>
    <ligand>
        <name>Mg(2+)</name>
        <dbReference type="ChEBI" id="CHEBI:18420"/>
    </ligand>
</feature>
<feature type="binding site" evidence="1">
    <location>
        <position position="325"/>
    </location>
    <ligand>
        <name>Mg(2+)</name>
        <dbReference type="ChEBI" id="CHEBI:18420"/>
    </ligand>
</feature>
<feature type="binding site" evidence="1">
    <location>
        <position position="330"/>
    </location>
    <ligand>
        <name>Zn(2+)</name>
        <dbReference type="ChEBI" id="CHEBI:29105"/>
        <label>1</label>
    </ligand>
</feature>
<feature type="binding site" evidence="1">
    <location>
        <position position="334"/>
    </location>
    <ligand>
        <name>Zn(2+)</name>
        <dbReference type="ChEBI" id="CHEBI:29105"/>
        <label>1</label>
    </ligand>
</feature>
<feature type="binding site" evidence="1">
    <location>
        <position position="373"/>
    </location>
    <ligand>
        <name>Zn(2+)</name>
        <dbReference type="ChEBI" id="CHEBI:29105"/>
        <label>2</label>
    </ligand>
</feature>
<feature type="binding site" evidence="1">
    <location>
        <position position="374"/>
    </location>
    <ligand>
        <name>Zn(2+)</name>
        <dbReference type="ChEBI" id="CHEBI:29105"/>
        <label>2</label>
    </ligand>
</feature>
<feature type="binding site" evidence="1">
    <location>
        <position position="484"/>
    </location>
    <ligand>
        <name>Zn(2+)</name>
        <dbReference type="ChEBI" id="CHEBI:29105"/>
        <label>1</label>
    </ligand>
</feature>
<feature type="modified residue" description="Phosphoserine" evidence="10 11 12">
    <location>
        <position position="123"/>
    </location>
</feature>
<feature type="glycosylation site" description="N-linked (GlcNAc...) asparagine">
    <location>
        <position position="268"/>
    </location>
</feature>
<feature type="glycosylation site" description="N-linked (GlcNAc...) asparagine">
    <location>
        <position position="401"/>
    </location>
</feature>
<feature type="sequence conflict" description="In Ref. 1; AAA34871." evidence="9" ref="1">
    <original>T</original>
    <variation>R</variation>
    <location>
        <position position="5"/>
    </location>
</feature>
<feature type="sequence conflict" description="In Ref. 1; AAA34871." evidence="9" ref="1">
    <original>S</original>
    <variation>T</variation>
    <location>
        <position position="55"/>
    </location>
</feature>
<feature type="sequence conflict" description="In Ref. 1; AAA34871." evidence="9" ref="1">
    <original>L</original>
    <variation>I</variation>
    <location>
        <position position="59"/>
    </location>
</feature>
<feature type="sequence conflict" description="In Ref. 1; AAA34871." evidence="9" ref="1">
    <original>C</original>
    <variation>S</variation>
    <location>
        <position position="132"/>
    </location>
</feature>
<feature type="sequence conflict" description="In Ref. 1; AAA34871." evidence="9" ref="1">
    <original>L</original>
    <variation>F</variation>
    <location>
        <position position="271"/>
    </location>
</feature>
<feature type="sequence conflict" description="In Ref. 4; AAU09711." evidence="9" ref="4">
    <original>R</original>
    <variation>G</variation>
    <location>
        <position position="328"/>
    </location>
</feature>
<feature type="sequence conflict" description="In Ref. 1; AAA34871." evidence="9" ref="1">
    <original>D</original>
    <variation>E</variation>
    <location>
        <position position="447"/>
    </location>
</feature>
<keyword id="KW-0963">Cytoplasm</keyword>
<keyword id="KW-0903">Direct protein sequencing</keyword>
<keyword id="KW-0325">Glycoprotein</keyword>
<keyword id="KW-0378">Hydrolase</keyword>
<keyword id="KW-0460">Magnesium</keyword>
<keyword id="KW-0472">Membrane</keyword>
<keyword id="KW-0479">Metal-binding</keyword>
<keyword id="KW-0597">Phosphoprotein</keyword>
<keyword id="KW-1185">Reference proteome</keyword>
<keyword id="KW-0812">Transmembrane</keyword>
<keyword id="KW-1133">Transmembrane helix</keyword>
<keyword id="KW-0926">Vacuole</keyword>
<keyword id="KW-0862">Zinc</keyword>
<sequence length="566" mass="63004">MMTHTLPSEQTRLVPGSDSSSRPKKRRISKRSKIIVSTVVCIGLLLVLVQLAFPSSFALRSASHKKKNVIFFVTDGMGPASLSMARSFNQHVNDLPIDDILTLDEHFIGSSRTRSSDSLVTDSAAGATAFACALKSYNGAIGVDPHHRPCGTVLEAAKLAGYLTGLVVTTRITDATPASFSSHVDYRWQEDLIATHQLGEYPLGRVVDLLMGGGRSHFYPQGEKASPYGHHGARKDGRDLIDEAQSNGWQYVGDRKNFDSLLKSHGENVTLPFLGLFADNDIPFEIDRDEKEYPSLKEQVKVALGALEKASNEDKDSNGFFLMVEGSRIDHAGHQNDPASQVREVLAFDEAFQYVLEFAENSDTETVLVSTSDHETGGLVTSRQVTASYPQYVWYPQVLANATHSGEFLKRKLVDFVHEHKGASSKIENFIKHEILEKDLGIYDYTDSDLETLIHLDDNANAIQDKLNDMVSFRAQIGWTTHGHSAVDVNIYAYANKKATWSYVLNNLQGNHENTEVGQFLENFLELNLNEVTDLIRDTKHTSDFDATEIASEVQHYDEYYHELTN</sequence>
<organism>
    <name type="scientific">Saccharomyces cerevisiae (strain ATCC 204508 / S288c)</name>
    <name type="common">Baker's yeast</name>
    <dbReference type="NCBI Taxonomy" id="559292"/>
    <lineage>
        <taxon>Eukaryota</taxon>
        <taxon>Fungi</taxon>
        <taxon>Dikarya</taxon>
        <taxon>Ascomycota</taxon>
        <taxon>Saccharomycotina</taxon>
        <taxon>Saccharomycetes</taxon>
        <taxon>Saccharomycetales</taxon>
        <taxon>Saccharomycetaceae</taxon>
        <taxon>Saccharomyces</taxon>
    </lineage>
</organism>
<accession>P11491</accession>
<accession>D6VTA4</accession>
<accession>E9P949</accession>
<accession>Q03374</accession>
<evidence type="ECO:0000250" key="1"/>
<evidence type="ECO:0000255" key="2"/>
<evidence type="ECO:0000255" key="3">
    <source>
        <dbReference type="PROSITE-ProRule" id="PRU10042"/>
    </source>
</evidence>
<evidence type="ECO:0000256" key="4">
    <source>
        <dbReference type="SAM" id="MobiDB-lite"/>
    </source>
</evidence>
<evidence type="ECO:0000269" key="5">
    <source>
    </source>
</evidence>
<evidence type="ECO:0000269" key="6">
    <source>
    </source>
</evidence>
<evidence type="ECO:0000269" key="7">
    <source>
    </source>
</evidence>
<evidence type="ECO:0000269" key="8">
    <source>
    </source>
</evidence>
<evidence type="ECO:0000305" key="9"/>
<evidence type="ECO:0007744" key="10">
    <source>
    </source>
</evidence>
<evidence type="ECO:0007744" key="11">
    <source>
    </source>
</evidence>
<evidence type="ECO:0007744" key="12">
    <source>
    </source>
</evidence>